<organism>
    <name type="scientific">Shigella flexneri</name>
    <dbReference type="NCBI Taxonomy" id="623"/>
    <lineage>
        <taxon>Bacteria</taxon>
        <taxon>Pseudomonadati</taxon>
        <taxon>Pseudomonadota</taxon>
        <taxon>Gammaproteobacteria</taxon>
        <taxon>Enterobacterales</taxon>
        <taxon>Enterobacteriaceae</taxon>
        <taxon>Shigella</taxon>
    </lineage>
</organism>
<sequence>MNKFEDIRGVAFDLDGTLVDSAPGLAAAVDMALYALELPVAGEERVITWIGNGADVLMERALTWARQERATLRKTMGKPPVDDDIPAEEQVRILRKLFDRYYGEVAEEGTFLFPHVADTLGALQAKGLPLGLVTNKPTPFVAPLLEALDIAKYFSVVIGGDDVQNKKPHPDPLLLVAERMGIAPQQMLFVGDSRNDIQAAKAAGCPSVGLTYGYNYGEAIDLSQPDVIYQSINDLLPALGLPHSENQESKND</sequence>
<accession>Q83PX1</accession>
<accession>Q7BYS3</accession>
<keyword id="KW-0119">Carbohydrate metabolism</keyword>
<keyword id="KW-0868">Chloride</keyword>
<keyword id="KW-0378">Hydrolase</keyword>
<keyword id="KW-0460">Magnesium</keyword>
<keyword id="KW-0479">Metal-binding</keyword>
<keyword id="KW-1185">Reference proteome</keyword>
<reference key="1">
    <citation type="journal article" date="2002" name="Nucleic Acids Res.">
        <title>Genome sequence of Shigella flexneri 2a: insights into pathogenicity through comparison with genomes of Escherichia coli K12 and O157.</title>
        <authorList>
            <person name="Jin Q."/>
            <person name="Yuan Z."/>
            <person name="Xu J."/>
            <person name="Wang Y."/>
            <person name="Shen Y."/>
            <person name="Lu W."/>
            <person name="Wang J."/>
            <person name="Liu H."/>
            <person name="Yang J."/>
            <person name="Yang F."/>
            <person name="Zhang X."/>
            <person name="Zhang J."/>
            <person name="Yang G."/>
            <person name="Wu H."/>
            <person name="Qu D."/>
            <person name="Dong J."/>
            <person name="Sun L."/>
            <person name="Xue Y."/>
            <person name="Zhao A."/>
            <person name="Gao Y."/>
            <person name="Zhu J."/>
            <person name="Kan B."/>
            <person name="Ding K."/>
            <person name="Chen S."/>
            <person name="Cheng H."/>
            <person name="Yao Z."/>
            <person name="He B."/>
            <person name="Chen R."/>
            <person name="Ma D."/>
            <person name="Qiang B."/>
            <person name="Wen Y."/>
            <person name="Hou Y."/>
            <person name="Yu J."/>
        </authorList>
    </citation>
    <scope>NUCLEOTIDE SEQUENCE [LARGE SCALE GENOMIC DNA]</scope>
    <source>
        <strain>301 / Serotype 2a</strain>
    </source>
</reference>
<reference key="2">
    <citation type="journal article" date="2003" name="Infect. Immun.">
        <title>Complete genome sequence and comparative genomics of Shigella flexneri serotype 2a strain 2457T.</title>
        <authorList>
            <person name="Wei J."/>
            <person name="Goldberg M.B."/>
            <person name="Burland V."/>
            <person name="Venkatesan M.M."/>
            <person name="Deng W."/>
            <person name="Fournier G."/>
            <person name="Mayhew G.F."/>
            <person name="Plunkett G. III"/>
            <person name="Rose D.J."/>
            <person name="Darling A."/>
            <person name="Mau B."/>
            <person name="Perna N.T."/>
            <person name="Payne S.M."/>
            <person name="Runyen-Janecky L.J."/>
            <person name="Zhou S."/>
            <person name="Schwartz D.C."/>
            <person name="Blattner F.R."/>
        </authorList>
    </citation>
    <scope>NUCLEOTIDE SEQUENCE [LARGE SCALE GENOMIC DNA]</scope>
    <source>
        <strain>ATCC 700930 / 2457T / Serotype 2a</strain>
    </source>
</reference>
<proteinExistence type="inferred from homology"/>
<protein>
    <recommendedName>
        <fullName evidence="1">Phosphoglycolate phosphatase</fullName>
        <shortName evidence="1">PGP</shortName>
        <shortName evidence="1">PGPase</shortName>
        <ecNumber evidence="1">3.1.3.18</ecNumber>
    </recommendedName>
</protein>
<name>GPH_SHIFL</name>
<comment type="function">
    <text evidence="1">Specifically catalyzes the dephosphorylation of 2-phosphoglycolate. Is involved in the dissimilation of the intracellular 2-phosphoglycolate formed during the DNA repair of 3'-phosphoglycolate ends, a major class of DNA lesions induced by oxidative stress.</text>
</comment>
<comment type="catalytic activity">
    <reaction evidence="1">
        <text>2-phosphoglycolate + H2O = glycolate + phosphate</text>
        <dbReference type="Rhea" id="RHEA:14369"/>
        <dbReference type="ChEBI" id="CHEBI:15377"/>
        <dbReference type="ChEBI" id="CHEBI:29805"/>
        <dbReference type="ChEBI" id="CHEBI:43474"/>
        <dbReference type="ChEBI" id="CHEBI:58033"/>
        <dbReference type="EC" id="3.1.3.18"/>
    </reaction>
</comment>
<comment type="cofactor">
    <cofactor evidence="1">
        <name>Mg(2+)</name>
        <dbReference type="ChEBI" id="CHEBI:18420"/>
    </cofactor>
</comment>
<comment type="cofactor">
    <cofactor evidence="1">
        <name>chloride</name>
        <dbReference type="ChEBI" id="CHEBI:17996"/>
    </cofactor>
</comment>
<comment type="pathway">
    <text evidence="1">Organic acid metabolism; glycolate biosynthesis; glycolate from 2-phosphoglycolate: step 1/1.</text>
</comment>
<comment type="subunit">
    <text evidence="1">Monomer.</text>
</comment>
<comment type="similarity">
    <text evidence="1">Belongs to the HAD-like hydrolase superfamily. CbbY/CbbZ/Gph/YieH family.</text>
</comment>
<feature type="chain" id="PRO_0000238179" description="Phosphoglycolate phosphatase">
    <location>
        <begin position="1"/>
        <end position="252"/>
    </location>
</feature>
<feature type="active site" description="Nucleophile" evidence="1">
    <location>
        <position position="13"/>
    </location>
</feature>
<feature type="binding site" evidence="1">
    <location>
        <position position="13"/>
    </location>
    <ligand>
        <name>Mg(2+)</name>
        <dbReference type="ChEBI" id="CHEBI:18420"/>
    </ligand>
</feature>
<feature type="binding site" evidence="1">
    <location>
        <position position="15"/>
    </location>
    <ligand>
        <name>Mg(2+)</name>
        <dbReference type="ChEBI" id="CHEBI:18420"/>
    </ligand>
</feature>
<feature type="binding site" evidence="1">
    <location>
        <position position="192"/>
    </location>
    <ligand>
        <name>Mg(2+)</name>
        <dbReference type="ChEBI" id="CHEBI:18420"/>
    </ligand>
</feature>
<gene>
    <name type="ordered locus">SF3403</name>
    <name type="ordered locus">S4359</name>
</gene>
<dbReference type="EC" id="3.1.3.18" evidence="1"/>
<dbReference type="EMBL" id="AE005674">
    <property type="protein sequence ID" value="AAN44865.1"/>
    <property type="molecule type" value="Genomic_DNA"/>
</dbReference>
<dbReference type="EMBL" id="AE014073">
    <property type="protein sequence ID" value="AAP19313.1"/>
    <property type="molecule type" value="Genomic_DNA"/>
</dbReference>
<dbReference type="SMR" id="Q83PX1"/>
<dbReference type="STRING" id="198214.SF3403"/>
<dbReference type="PaxDb" id="198214-SF3403"/>
<dbReference type="KEGG" id="sfl:SF3403"/>
<dbReference type="KEGG" id="sfx:S4359"/>
<dbReference type="PATRIC" id="fig|198214.7.peg.4017"/>
<dbReference type="HOGENOM" id="CLU_045011_19_1_6"/>
<dbReference type="BRENDA" id="3.1.3.18">
    <property type="organism ID" value="5712"/>
</dbReference>
<dbReference type="UniPathway" id="UPA00865">
    <property type="reaction ID" value="UER00834"/>
</dbReference>
<dbReference type="Proteomes" id="UP000001006">
    <property type="component" value="Chromosome"/>
</dbReference>
<dbReference type="Proteomes" id="UP000002673">
    <property type="component" value="Chromosome"/>
</dbReference>
<dbReference type="GO" id="GO:0005829">
    <property type="term" value="C:cytosol"/>
    <property type="evidence" value="ECO:0007669"/>
    <property type="project" value="TreeGrafter"/>
</dbReference>
<dbReference type="GO" id="GO:0046872">
    <property type="term" value="F:metal ion binding"/>
    <property type="evidence" value="ECO:0007669"/>
    <property type="project" value="UniProtKB-KW"/>
</dbReference>
<dbReference type="GO" id="GO:0008967">
    <property type="term" value="F:phosphoglycolate phosphatase activity"/>
    <property type="evidence" value="ECO:0007669"/>
    <property type="project" value="UniProtKB-UniRule"/>
</dbReference>
<dbReference type="GO" id="GO:0005975">
    <property type="term" value="P:carbohydrate metabolic process"/>
    <property type="evidence" value="ECO:0007669"/>
    <property type="project" value="InterPro"/>
</dbReference>
<dbReference type="GO" id="GO:0006281">
    <property type="term" value="P:DNA repair"/>
    <property type="evidence" value="ECO:0007669"/>
    <property type="project" value="TreeGrafter"/>
</dbReference>
<dbReference type="GO" id="GO:0046295">
    <property type="term" value="P:glycolate biosynthetic process"/>
    <property type="evidence" value="ECO:0007669"/>
    <property type="project" value="UniProtKB-UniRule"/>
</dbReference>
<dbReference type="CDD" id="cd16417">
    <property type="entry name" value="HAD_PGPase"/>
    <property type="match status" value="1"/>
</dbReference>
<dbReference type="FunFam" id="1.10.150.240:FF:000003">
    <property type="entry name" value="Phosphoglycolate phosphatase"/>
    <property type="match status" value="1"/>
</dbReference>
<dbReference type="FunFam" id="3.40.50.1000:FF:000022">
    <property type="entry name" value="Phosphoglycolate phosphatase"/>
    <property type="match status" value="1"/>
</dbReference>
<dbReference type="Gene3D" id="3.40.50.1000">
    <property type="entry name" value="HAD superfamily/HAD-like"/>
    <property type="match status" value="1"/>
</dbReference>
<dbReference type="Gene3D" id="1.10.150.240">
    <property type="entry name" value="Putative phosphatase, domain 2"/>
    <property type="match status" value="1"/>
</dbReference>
<dbReference type="HAMAP" id="MF_00495">
    <property type="entry name" value="GPH_hydrolase_bact"/>
    <property type="match status" value="1"/>
</dbReference>
<dbReference type="InterPro" id="IPR050155">
    <property type="entry name" value="HAD-like_hydrolase_sf"/>
</dbReference>
<dbReference type="InterPro" id="IPR036412">
    <property type="entry name" value="HAD-like_sf"/>
</dbReference>
<dbReference type="InterPro" id="IPR006439">
    <property type="entry name" value="HAD-SF_hydro_IA"/>
</dbReference>
<dbReference type="InterPro" id="IPR023214">
    <property type="entry name" value="HAD_sf"/>
</dbReference>
<dbReference type="InterPro" id="IPR023198">
    <property type="entry name" value="PGP-like_dom2"/>
</dbReference>
<dbReference type="InterPro" id="IPR037512">
    <property type="entry name" value="PGPase_prok"/>
</dbReference>
<dbReference type="NCBIfam" id="TIGR01549">
    <property type="entry name" value="HAD-SF-IA-v1"/>
    <property type="match status" value="1"/>
</dbReference>
<dbReference type="NCBIfam" id="TIGR01509">
    <property type="entry name" value="HAD-SF-IA-v3"/>
    <property type="match status" value="1"/>
</dbReference>
<dbReference type="NCBIfam" id="TIGR01449">
    <property type="entry name" value="PGP_bact"/>
    <property type="match status" value="1"/>
</dbReference>
<dbReference type="NCBIfam" id="NF009694">
    <property type="entry name" value="PRK13222.1-1"/>
    <property type="match status" value="1"/>
</dbReference>
<dbReference type="NCBIfam" id="NF009695">
    <property type="entry name" value="PRK13222.1-2"/>
    <property type="match status" value="1"/>
</dbReference>
<dbReference type="NCBIfam" id="NF009697">
    <property type="entry name" value="PRK13222.1-4"/>
    <property type="match status" value="1"/>
</dbReference>
<dbReference type="PANTHER" id="PTHR43434">
    <property type="entry name" value="PHOSPHOGLYCOLATE PHOSPHATASE"/>
    <property type="match status" value="1"/>
</dbReference>
<dbReference type="PANTHER" id="PTHR43434:SF1">
    <property type="entry name" value="PHOSPHOGLYCOLATE PHOSPHATASE"/>
    <property type="match status" value="1"/>
</dbReference>
<dbReference type="Pfam" id="PF00702">
    <property type="entry name" value="Hydrolase"/>
    <property type="match status" value="1"/>
</dbReference>
<dbReference type="PRINTS" id="PR00413">
    <property type="entry name" value="HADHALOGNASE"/>
</dbReference>
<dbReference type="SFLD" id="SFLDG01135">
    <property type="entry name" value="C1.5.6:_HAD__Beta-PGM__Phospha"/>
    <property type="match status" value="1"/>
</dbReference>
<dbReference type="SFLD" id="SFLDG01129">
    <property type="entry name" value="C1.5:_HAD__Beta-PGM__Phosphata"/>
    <property type="match status" value="1"/>
</dbReference>
<dbReference type="SUPFAM" id="SSF56784">
    <property type="entry name" value="HAD-like"/>
    <property type="match status" value="1"/>
</dbReference>
<evidence type="ECO:0000255" key="1">
    <source>
        <dbReference type="HAMAP-Rule" id="MF_00495"/>
    </source>
</evidence>